<gene>
    <name type="primary">UGT73C7</name>
    <name type="ordered locus">At3g53160</name>
    <name type="ORF">T4D2.90</name>
</gene>
<comment type="similarity">
    <text evidence="2">Belongs to the UDP-glycosyltransferase family.</text>
</comment>
<sequence>MCSHDPLHFVVIPFMAQGHMIPLVDISRLLSQRQGVTVCIITTTQNVAKIKTSLSFSSLFATINIVEVKFLSQQTGLPEGCESLDMLASMGDMVKFFDAANSLEEQVEKAMEEMVQPRPSCIIGDMSLPFTSRLAKKFKIPKLIFHGFSCFSLMSIQVVRESGILKMIESNDEYFDLPGLPDKVEFTKPQVSVLQPVEGNMKESTAKIIEADNDSYGVIVNTFEELEVDYAREYRKARAGKVWCVGPVSLCNRLGLDKAKRGDKASIGQDQCLQWLDSQETGSVLYVCLGSLCNLPLAQLKELGLGLEASNKPFIWVIREWGKYGDLANWMQQSGFEERIKDRGLVIKGWAPQVFILSHASIGGFLTHCGWNSTLEGITAGVPLLTWPLFAEQFLNEKLVVQILKAGLKIGVEKLMKYGKEEEIGAMVSRECVRKAVDELMGDSEEAEERRRKVTELSDLANKALEKGGSSDSNITLLIQDIMEQSQNQF</sequence>
<protein>
    <recommendedName>
        <fullName>UDP-glycosyltransferase 73C7</fullName>
        <ecNumber>2.4.1.-</ecNumber>
    </recommendedName>
</protein>
<keyword id="KW-0328">Glycosyltransferase</keyword>
<keyword id="KW-1185">Reference proteome</keyword>
<keyword id="KW-0808">Transferase</keyword>
<dbReference type="EC" id="2.4.1.-"/>
<dbReference type="EMBL" id="AL132958">
    <property type="protein sequence ID" value="CAB64219.1"/>
    <property type="molecule type" value="Genomic_DNA"/>
</dbReference>
<dbReference type="EMBL" id="CP002686">
    <property type="protein sequence ID" value="AEE79043.1"/>
    <property type="molecule type" value="Genomic_DNA"/>
</dbReference>
<dbReference type="EMBL" id="BT015093">
    <property type="protein sequence ID" value="AAT71965.1"/>
    <property type="molecule type" value="mRNA"/>
</dbReference>
<dbReference type="EMBL" id="BT020347">
    <property type="protein sequence ID" value="AAV85702.1"/>
    <property type="molecule type" value="mRNA"/>
</dbReference>
<dbReference type="PIR" id="T46162">
    <property type="entry name" value="T46162"/>
</dbReference>
<dbReference type="RefSeq" id="NP_190884.1">
    <property type="nucleotide sequence ID" value="NM_115176.3"/>
</dbReference>
<dbReference type="SMR" id="Q9SCP5"/>
<dbReference type="FunCoup" id="Q9SCP5">
    <property type="interactions" value="127"/>
</dbReference>
<dbReference type="STRING" id="3702.Q9SCP5"/>
<dbReference type="CAZy" id="GT1">
    <property type="family name" value="Glycosyltransferase Family 1"/>
</dbReference>
<dbReference type="PaxDb" id="3702-AT3G53160.1"/>
<dbReference type="ProteomicsDB" id="243206"/>
<dbReference type="EnsemblPlants" id="AT3G53160.1">
    <property type="protein sequence ID" value="AT3G53160.1"/>
    <property type="gene ID" value="AT3G53160"/>
</dbReference>
<dbReference type="GeneID" id="824482"/>
<dbReference type="Gramene" id="AT3G53160.1">
    <property type="protein sequence ID" value="AT3G53160.1"/>
    <property type="gene ID" value="AT3G53160"/>
</dbReference>
<dbReference type="KEGG" id="ath:AT3G53160"/>
<dbReference type="Araport" id="AT3G53160"/>
<dbReference type="TAIR" id="AT3G53160">
    <property type="gene designation" value="UGT73C7"/>
</dbReference>
<dbReference type="eggNOG" id="KOG1192">
    <property type="taxonomic scope" value="Eukaryota"/>
</dbReference>
<dbReference type="HOGENOM" id="CLU_001724_2_2_1"/>
<dbReference type="InParanoid" id="Q9SCP5"/>
<dbReference type="OMA" id="WVIREWG"/>
<dbReference type="PhylomeDB" id="Q9SCP5"/>
<dbReference type="BioCyc" id="ARA:AT3G53160-MONOMER"/>
<dbReference type="PRO" id="PR:Q9SCP5"/>
<dbReference type="Proteomes" id="UP000006548">
    <property type="component" value="Chromosome 3"/>
</dbReference>
<dbReference type="ExpressionAtlas" id="Q9SCP5">
    <property type="expression patterns" value="baseline and differential"/>
</dbReference>
<dbReference type="GO" id="GO:0035251">
    <property type="term" value="F:UDP-glucosyltransferase activity"/>
    <property type="evidence" value="ECO:0000314"/>
    <property type="project" value="TAIR"/>
</dbReference>
<dbReference type="GO" id="GO:0009698">
    <property type="term" value="P:phenylpropanoid metabolic process"/>
    <property type="evidence" value="ECO:0000316"/>
    <property type="project" value="TAIR"/>
</dbReference>
<dbReference type="GO" id="GO:0045089">
    <property type="term" value="P:positive regulation of innate immune response"/>
    <property type="evidence" value="ECO:0000316"/>
    <property type="project" value="TAIR"/>
</dbReference>
<dbReference type="GO" id="GO:0051707">
    <property type="term" value="P:response to other organism"/>
    <property type="evidence" value="ECO:0000270"/>
    <property type="project" value="TAIR"/>
</dbReference>
<dbReference type="CDD" id="cd03784">
    <property type="entry name" value="GT1_Gtf-like"/>
    <property type="match status" value="1"/>
</dbReference>
<dbReference type="FunFam" id="3.40.50.2000:FF:000047">
    <property type="entry name" value="Glycosyltransferase"/>
    <property type="match status" value="1"/>
</dbReference>
<dbReference type="FunFam" id="3.40.50.2000:FF:000071">
    <property type="entry name" value="Glycosyltransferase"/>
    <property type="match status" value="1"/>
</dbReference>
<dbReference type="Gene3D" id="3.40.50.2000">
    <property type="entry name" value="Glycogen Phosphorylase B"/>
    <property type="match status" value="2"/>
</dbReference>
<dbReference type="InterPro" id="IPR002213">
    <property type="entry name" value="UDP_glucos_trans"/>
</dbReference>
<dbReference type="InterPro" id="IPR035595">
    <property type="entry name" value="UDP_glycos_trans_CS"/>
</dbReference>
<dbReference type="PANTHER" id="PTHR48047">
    <property type="entry name" value="GLYCOSYLTRANSFERASE"/>
    <property type="match status" value="1"/>
</dbReference>
<dbReference type="PANTHER" id="PTHR48047:SF77">
    <property type="entry name" value="UDP-GLYCOSYLTRANSFERASE 73C7"/>
    <property type="match status" value="1"/>
</dbReference>
<dbReference type="Pfam" id="PF00201">
    <property type="entry name" value="UDPGT"/>
    <property type="match status" value="1"/>
</dbReference>
<dbReference type="SUPFAM" id="SSF53756">
    <property type="entry name" value="UDP-Glycosyltransferase/glycogen phosphorylase"/>
    <property type="match status" value="1"/>
</dbReference>
<dbReference type="PROSITE" id="PS00375">
    <property type="entry name" value="UDPGT"/>
    <property type="match status" value="1"/>
</dbReference>
<reference key="1">
    <citation type="journal article" date="2000" name="Nature">
        <title>Sequence and analysis of chromosome 3 of the plant Arabidopsis thaliana.</title>
        <authorList>
            <person name="Salanoubat M."/>
            <person name="Lemcke K."/>
            <person name="Rieger M."/>
            <person name="Ansorge W."/>
            <person name="Unseld M."/>
            <person name="Fartmann B."/>
            <person name="Valle G."/>
            <person name="Bloecker H."/>
            <person name="Perez-Alonso M."/>
            <person name="Obermaier B."/>
            <person name="Delseny M."/>
            <person name="Boutry M."/>
            <person name="Grivell L.A."/>
            <person name="Mache R."/>
            <person name="Puigdomenech P."/>
            <person name="De Simone V."/>
            <person name="Choisne N."/>
            <person name="Artiguenave F."/>
            <person name="Robert C."/>
            <person name="Brottier P."/>
            <person name="Wincker P."/>
            <person name="Cattolico L."/>
            <person name="Weissenbach J."/>
            <person name="Saurin W."/>
            <person name="Quetier F."/>
            <person name="Schaefer M."/>
            <person name="Mueller-Auer S."/>
            <person name="Gabel C."/>
            <person name="Fuchs M."/>
            <person name="Benes V."/>
            <person name="Wurmbach E."/>
            <person name="Drzonek H."/>
            <person name="Erfle H."/>
            <person name="Jordan N."/>
            <person name="Bangert S."/>
            <person name="Wiedelmann R."/>
            <person name="Kranz H."/>
            <person name="Voss H."/>
            <person name="Holland R."/>
            <person name="Brandt P."/>
            <person name="Nyakatura G."/>
            <person name="Vezzi A."/>
            <person name="D'Angelo M."/>
            <person name="Pallavicini A."/>
            <person name="Toppo S."/>
            <person name="Simionati B."/>
            <person name="Conrad A."/>
            <person name="Hornischer K."/>
            <person name="Kauer G."/>
            <person name="Loehnert T.-H."/>
            <person name="Nordsiek G."/>
            <person name="Reichelt J."/>
            <person name="Scharfe M."/>
            <person name="Schoen O."/>
            <person name="Bargues M."/>
            <person name="Terol J."/>
            <person name="Climent J."/>
            <person name="Navarro P."/>
            <person name="Collado C."/>
            <person name="Perez-Perez A."/>
            <person name="Ottenwaelder B."/>
            <person name="Duchemin D."/>
            <person name="Cooke R."/>
            <person name="Laudie M."/>
            <person name="Berger-Llauro C."/>
            <person name="Purnelle B."/>
            <person name="Masuy D."/>
            <person name="de Haan M."/>
            <person name="Maarse A.C."/>
            <person name="Alcaraz J.-P."/>
            <person name="Cottet A."/>
            <person name="Casacuberta E."/>
            <person name="Monfort A."/>
            <person name="Argiriou A."/>
            <person name="Flores M."/>
            <person name="Liguori R."/>
            <person name="Vitale D."/>
            <person name="Mannhaupt G."/>
            <person name="Haase D."/>
            <person name="Schoof H."/>
            <person name="Rudd S."/>
            <person name="Zaccaria P."/>
            <person name="Mewes H.-W."/>
            <person name="Mayer K.F.X."/>
            <person name="Kaul S."/>
            <person name="Town C.D."/>
            <person name="Koo H.L."/>
            <person name="Tallon L.J."/>
            <person name="Jenkins J."/>
            <person name="Rooney T."/>
            <person name="Rizzo M."/>
            <person name="Walts A."/>
            <person name="Utterback T."/>
            <person name="Fujii C.Y."/>
            <person name="Shea T.P."/>
            <person name="Creasy T.H."/>
            <person name="Haas B."/>
            <person name="Maiti R."/>
            <person name="Wu D."/>
            <person name="Peterson J."/>
            <person name="Van Aken S."/>
            <person name="Pai G."/>
            <person name="Militscher J."/>
            <person name="Sellers P."/>
            <person name="Gill J.E."/>
            <person name="Feldblyum T.V."/>
            <person name="Preuss D."/>
            <person name="Lin X."/>
            <person name="Nierman W.C."/>
            <person name="Salzberg S.L."/>
            <person name="White O."/>
            <person name="Venter J.C."/>
            <person name="Fraser C.M."/>
            <person name="Kaneko T."/>
            <person name="Nakamura Y."/>
            <person name="Sato S."/>
            <person name="Kato T."/>
            <person name="Asamizu E."/>
            <person name="Sasamoto S."/>
            <person name="Kimura T."/>
            <person name="Idesawa K."/>
            <person name="Kawashima K."/>
            <person name="Kishida Y."/>
            <person name="Kiyokawa C."/>
            <person name="Kohara M."/>
            <person name="Matsumoto M."/>
            <person name="Matsuno A."/>
            <person name="Muraki A."/>
            <person name="Nakayama S."/>
            <person name="Nakazaki N."/>
            <person name="Shinpo S."/>
            <person name="Takeuchi C."/>
            <person name="Wada T."/>
            <person name="Watanabe A."/>
            <person name="Yamada M."/>
            <person name="Yasuda M."/>
            <person name="Tabata S."/>
        </authorList>
    </citation>
    <scope>NUCLEOTIDE SEQUENCE [LARGE SCALE GENOMIC DNA]</scope>
    <source>
        <strain>cv. Columbia</strain>
    </source>
</reference>
<reference key="2">
    <citation type="journal article" date="2017" name="Plant J.">
        <title>Araport11: a complete reannotation of the Arabidopsis thaliana reference genome.</title>
        <authorList>
            <person name="Cheng C.Y."/>
            <person name="Krishnakumar V."/>
            <person name="Chan A.P."/>
            <person name="Thibaud-Nissen F."/>
            <person name="Schobel S."/>
            <person name="Town C.D."/>
        </authorList>
    </citation>
    <scope>GENOME REANNOTATION</scope>
    <source>
        <strain>cv. Columbia</strain>
    </source>
</reference>
<reference key="3">
    <citation type="submission" date="2004-07" db="EMBL/GenBank/DDBJ databases">
        <title>Arabidopsis ORF clones.</title>
        <authorList>
            <person name="Cheuk R.F."/>
            <person name="Chen H."/>
            <person name="Kim C.J."/>
            <person name="Shinn P."/>
            <person name="Ecker J.R."/>
        </authorList>
    </citation>
    <scope>NUCLEOTIDE SEQUENCE [LARGE SCALE MRNA]</scope>
    <source>
        <strain>cv. Columbia</strain>
    </source>
</reference>
<reference key="4">
    <citation type="submission" date="2004-12" db="EMBL/GenBank/DDBJ databases">
        <title>Arabidopsis ORF clones.</title>
        <authorList>
            <person name="Cheuk R.F."/>
            <person name="Chen H."/>
            <person name="Kim C.J."/>
            <person name="Shinn P."/>
            <person name="Ecker J.R."/>
        </authorList>
    </citation>
    <scope>NUCLEOTIDE SEQUENCE [LARGE SCALE MRNA]</scope>
    <source>
        <strain>cv. Columbia</strain>
    </source>
</reference>
<reference key="5">
    <citation type="journal article" date="2001" name="J. Biol. Chem.">
        <title>Phylogenetic analysis of the UDP-glycosyltransferase multigene family of Arabidopsis thaliana.</title>
        <authorList>
            <person name="Li Y."/>
            <person name="Baldauf S."/>
            <person name="Lim E.K."/>
            <person name="Bowles D.J."/>
        </authorList>
    </citation>
    <scope>GENE FAMILY</scope>
</reference>
<name>U73C7_ARATH</name>
<evidence type="ECO:0000250" key="1"/>
<evidence type="ECO:0000305" key="2"/>
<organism>
    <name type="scientific">Arabidopsis thaliana</name>
    <name type="common">Mouse-ear cress</name>
    <dbReference type="NCBI Taxonomy" id="3702"/>
    <lineage>
        <taxon>Eukaryota</taxon>
        <taxon>Viridiplantae</taxon>
        <taxon>Streptophyta</taxon>
        <taxon>Embryophyta</taxon>
        <taxon>Tracheophyta</taxon>
        <taxon>Spermatophyta</taxon>
        <taxon>Magnoliopsida</taxon>
        <taxon>eudicotyledons</taxon>
        <taxon>Gunneridae</taxon>
        <taxon>Pentapetalae</taxon>
        <taxon>rosids</taxon>
        <taxon>malvids</taxon>
        <taxon>Brassicales</taxon>
        <taxon>Brassicaceae</taxon>
        <taxon>Camelineae</taxon>
        <taxon>Arabidopsis</taxon>
    </lineage>
</organism>
<feature type="chain" id="PRO_0000409098" description="UDP-glycosyltransferase 73C7">
    <location>
        <begin position="1"/>
        <end position="490"/>
    </location>
</feature>
<feature type="binding site" evidence="1">
    <location>
        <position position="291"/>
    </location>
    <ligand>
        <name>UDP-alpha-D-glucose</name>
        <dbReference type="ChEBI" id="CHEBI:58885"/>
    </ligand>
</feature>
<feature type="binding site" evidence="1">
    <location>
        <begin position="351"/>
        <end position="353"/>
    </location>
    <ligand>
        <name>UDP-alpha-D-glucose</name>
        <dbReference type="ChEBI" id="CHEBI:58885"/>
    </ligand>
</feature>
<feature type="binding site" evidence="1">
    <location>
        <begin position="368"/>
        <end position="376"/>
    </location>
    <ligand>
        <name>UDP-alpha-D-glucose</name>
        <dbReference type="ChEBI" id="CHEBI:58885"/>
    </ligand>
</feature>
<feature type="binding site" evidence="1">
    <location>
        <begin position="390"/>
        <end position="393"/>
    </location>
    <ligand>
        <name>UDP-alpha-D-glucose</name>
        <dbReference type="ChEBI" id="CHEBI:58885"/>
    </ligand>
</feature>
<accession>Q9SCP5</accession>
<proteinExistence type="evidence at transcript level"/>